<accession>A0LJM6</accession>
<sequence>MQPISPDGSLSPWEPGMFSLAVYAVLVAAFVAVQLFVAWWLGERKPGVEKARPYECGIIPTGSARLRYPVPFYLVAIFFLIFDMEGAYILTWAVAFEELGWAGWLQMSFFIGLLLVGLVYVWKKGGLDWRPSYGKK</sequence>
<keyword id="KW-0997">Cell inner membrane</keyword>
<keyword id="KW-1003">Cell membrane</keyword>
<keyword id="KW-0472">Membrane</keyword>
<keyword id="KW-0520">NAD</keyword>
<keyword id="KW-0874">Quinone</keyword>
<keyword id="KW-1185">Reference proteome</keyword>
<keyword id="KW-1278">Translocase</keyword>
<keyword id="KW-0812">Transmembrane</keyword>
<keyword id="KW-1133">Transmembrane helix</keyword>
<keyword id="KW-0813">Transport</keyword>
<keyword id="KW-0830">Ubiquinone</keyword>
<dbReference type="EC" id="7.1.1.-" evidence="1"/>
<dbReference type="EMBL" id="CP000478">
    <property type="protein sequence ID" value="ABK17628.1"/>
    <property type="molecule type" value="Genomic_DNA"/>
</dbReference>
<dbReference type="RefSeq" id="WP_011698798.1">
    <property type="nucleotide sequence ID" value="NC_008554.1"/>
</dbReference>
<dbReference type="SMR" id="A0LJM6"/>
<dbReference type="FunCoup" id="A0LJM6">
    <property type="interactions" value="196"/>
</dbReference>
<dbReference type="STRING" id="335543.Sfum_1943"/>
<dbReference type="KEGG" id="sfu:Sfum_1943"/>
<dbReference type="eggNOG" id="COG0838">
    <property type="taxonomic scope" value="Bacteria"/>
</dbReference>
<dbReference type="HOGENOM" id="CLU_119549_2_0_7"/>
<dbReference type="InParanoid" id="A0LJM6"/>
<dbReference type="OrthoDB" id="9791970at2"/>
<dbReference type="Proteomes" id="UP000001784">
    <property type="component" value="Chromosome"/>
</dbReference>
<dbReference type="GO" id="GO:0030964">
    <property type="term" value="C:NADH dehydrogenase complex"/>
    <property type="evidence" value="ECO:0007669"/>
    <property type="project" value="TreeGrafter"/>
</dbReference>
<dbReference type="GO" id="GO:0005886">
    <property type="term" value="C:plasma membrane"/>
    <property type="evidence" value="ECO:0007669"/>
    <property type="project" value="UniProtKB-SubCell"/>
</dbReference>
<dbReference type="GO" id="GO:0008137">
    <property type="term" value="F:NADH dehydrogenase (ubiquinone) activity"/>
    <property type="evidence" value="ECO:0007669"/>
    <property type="project" value="InterPro"/>
</dbReference>
<dbReference type="GO" id="GO:0050136">
    <property type="term" value="F:NADH:ubiquinone reductase (non-electrogenic) activity"/>
    <property type="evidence" value="ECO:0007669"/>
    <property type="project" value="UniProtKB-UniRule"/>
</dbReference>
<dbReference type="GO" id="GO:0048038">
    <property type="term" value="F:quinone binding"/>
    <property type="evidence" value="ECO:0007669"/>
    <property type="project" value="UniProtKB-KW"/>
</dbReference>
<dbReference type="Gene3D" id="1.20.58.1610">
    <property type="entry name" value="NADH:ubiquinone/plastoquinone oxidoreductase, chain 3"/>
    <property type="match status" value="1"/>
</dbReference>
<dbReference type="HAMAP" id="MF_01394">
    <property type="entry name" value="NDH1_NuoA"/>
    <property type="match status" value="1"/>
</dbReference>
<dbReference type="InterPro" id="IPR023043">
    <property type="entry name" value="NAD(P)H_OxRDtase_bac/plastid"/>
</dbReference>
<dbReference type="InterPro" id="IPR000440">
    <property type="entry name" value="NADH_UbQ/plastoQ_OxRdtase_su3"/>
</dbReference>
<dbReference type="InterPro" id="IPR038430">
    <property type="entry name" value="NDAH_ubi_oxred_su3_sf"/>
</dbReference>
<dbReference type="PANTHER" id="PTHR11058:SF21">
    <property type="entry name" value="NADH-QUINONE OXIDOREDUCTASE SUBUNIT A"/>
    <property type="match status" value="1"/>
</dbReference>
<dbReference type="PANTHER" id="PTHR11058">
    <property type="entry name" value="NADH-UBIQUINONE OXIDOREDUCTASE CHAIN 3"/>
    <property type="match status" value="1"/>
</dbReference>
<dbReference type="Pfam" id="PF00507">
    <property type="entry name" value="Oxidored_q4"/>
    <property type="match status" value="1"/>
</dbReference>
<organism>
    <name type="scientific">Syntrophobacter fumaroxidans (strain DSM 10017 / MPOB)</name>
    <dbReference type="NCBI Taxonomy" id="335543"/>
    <lineage>
        <taxon>Bacteria</taxon>
        <taxon>Pseudomonadati</taxon>
        <taxon>Thermodesulfobacteriota</taxon>
        <taxon>Syntrophobacteria</taxon>
        <taxon>Syntrophobacterales</taxon>
        <taxon>Syntrophobacteraceae</taxon>
        <taxon>Syntrophobacter</taxon>
    </lineage>
</organism>
<evidence type="ECO:0000255" key="1">
    <source>
        <dbReference type="HAMAP-Rule" id="MF_01394"/>
    </source>
</evidence>
<feature type="chain" id="PRO_0000362795" description="NADH-quinone oxidoreductase subunit A">
    <location>
        <begin position="1"/>
        <end position="136"/>
    </location>
</feature>
<feature type="transmembrane region" description="Helical" evidence="1">
    <location>
        <begin position="20"/>
        <end position="40"/>
    </location>
</feature>
<feature type="transmembrane region" description="Helical" evidence="1">
    <location>
        <begin position="70"/>
        <end position="90"/>
    </location>
</feature>
<feature type="transmembrane region" description="Helical" evidence="1">
    <location>
        <begin position="99"/>
        <end position="119"/>
    </location>
</feature>
<protein>
    <recommendedName>
        <fullName evidence="1">NADH-quinone oxidoreductase subunit A</fullName>
        <ecNumber evidence="1">7.1.1.-</ecNumber>
    </recommendedName>
    <alternativeName>
        <fullName evidence="1">NADH dehydrogenase I subunit A</fullName>
    </alternativeName>
    <alternativeName>
        <fullName evidence="1">NDH-1 subunit A</fullName>
    </alternativeName>
    <alternativeName>
        <fullName evidence="1">NUO1</fullName>
    </alternativeName>
</protein>
<comment type="function">
    <text evidence="1">NDH-1 shuttles electrons from NADH, via FMN and iron-sulfur (Fe-S) centers, to quinones in the respiratory chain. The immediate electron acceptor for the enzyme in this species is believed to be ubiquinone. Couples the redox reaction to proton translocation (for every two electrons transferred, four hydrogen ions are translocated across the cytoplasmic membrane), and thus conserves the redox energy in a proton gradient.</text>
</comment>
<comment type="catalytic activity">
    <reaction evidence="1">
        <text>a quinone + NADH + 5 H(+)(in) = a quinol + NAD(+) + 4 H(+)(out)</text>
        <dbReference type="Rhea" id="RHEA:57888"/>
        <dbReference type="ChEBI" id="CHEBI:15378"/>
        <dbReference type="ChEBI" id="CHEBI:24646"/>
        <dbReference type="ChEBI" id="CHEBI:57540"/>
        <dbReference type="ChEBI" id="CHEBI:57945"/>
        <dbReference type="ChEBI" id="CHEBI:132124"/>
    </reaction>
</comment>
<comment type="subunit">
    <text evidence="1">NDH-1 is composed of 14 different subunits. Subunits NuoA, H, J, K, L, M, N constitute the membrane sector of the complex.</text>
</comment>
<comment type="subcellular location">
    <subcellularLocation>
        <location evidence="1">Cell inner membrane</location>
        <topology evidence="1">Multi-pass membrane protein</topology>
    </subcellularLocation>
</comment>
<comment type="similarity">
    <text evidence="1">Belongs to the complex I subunit 3 family.</text>
</comment>
<gene>
    <name evidence="1" type="primary">nuoA</name>
    <name type="ordered locus">Sfum_1943</name>
</gene>
<proteinExistence type="inferred from homology"/>
<reference key="1">
    <citation type="submission" date="2006-10" db="EMBL/GenBank/DDBJ databases">
        <title>Complete sequence of Syntrophobacter fumaroxidans MPOB.</title>
        <authorList>
            <consortium name="US DOE Joint Genome Institute"/>
            <person name="Copeland A."/>
            <person name="Lucas S."/>
            <person name="Lapidus A."/>
            <person name="Barry K."/>
            <person name="Detter J.C."/>
            <person name="Glavina del Rio T."/>
            <person name="Hammon N."/>
            <person name="Israni S."/>
            <person name="Pitluck S."/>
            <person name="Goltsman E.G."/>
            <person name="Martinez M."/>
            <person name="Schmutz J."/>
            <person name="Larimer F."/>
            <person name="Land M."/>
            <person name="Hauser L."/>
            <person name="Kyrpides N."/>
            <person name="Kim E."/>
            <person name="Boone D.R."/>
            <person name="Brockman F."/>
            <person name="Culley D."/>
            <person name="Ferry J."/>
            <person name="Gunsalus R."/>
            <person name="McInerney M.J."/>
            <person name="Morrison M."/>
            <person name="Plugge C."/>
            <person name="Rohlin L."/>
            <person name="Scholten J."/>
            <person name="Sieber J."/>
            <person name="Stams A.J.M."/>
            <person name="Worm P."/>
            <person name="Henstra A.M."/>
            <person name="Richardson P."/>
        </authorList>
    </citation>
    <scope>NUCLEOTIDE SEQUENCE [LARGE SCALE GENOMIC DNA]</scope>
    <source>
        <strain>DSM 10017 / MPOB</strain>
    </source>
</reference>
<name>NUOA_SYNFM</name>